<dbReference type="EC" id="3.6.1.41" evidence="1"/>
<dbReference type="EMBL" id="CP001158">
    <property type="protein sequence ID" value="ACL29962.1"/>
    <property type="molecule type" value="Genomic_DNA"/>
</dbReference>
<dbReference type="RefSeq" id="WP_012619447.1">
    <property type="nucleotide sequence ID" value="NC_011834.1"/>
</dbReference>
<dbReference type="SMR" id="B8D747"/>
<dbReference type="KEGG" id="bau:BUAPTUC7_141"/>
<dbReference type="HOGENOM" id="CLU_056184_2_0_6"/>
<dbReference type="GO" id="GO:0008803">
    <property type="term" value="F:bis(5'-nucleosyl)-tetraphosphatase (symmetrical) activity"/>
    <property type="evidence" value="ECO:0007669"/>
    <property type="project" value="UniProtKB-UniRule"/>
</dbReference>
<dbReference type="CDD" id="cd07422">
    <property type="entry name" value="MPP_ApaH"/>
    <property type="match status" value="1"/>
</dbReference>
<dbReference type="Gene3D" id="3.60.21.10">
    <property type="match status" value="1"/>
</dbReference>
<dbReference type="HAMAP" id="MF_00199">
    <property type="entry name" value="ApaH"/>
    <property type="match status" value="1"/>
</dbReference>
<dbReference type="InterPro" id="IPR004617">
    <property type="entry name" value="ApaH"/>
</dbReference>
<dbReference type="InterPro" id="IPR004843">
    <property type="entry name" value="Calcineurin-like_PHP_ApaH"/>
</dbReference>
<dbReference type="InterPro" id="IPR029052">
    <property type="entry name" value="Metallo-depent_PP-like"/>
</dbReference>
<dbReference type="NCBIfam" id="TIGR00668">
    <property type="entry name" value="apaH"/>
    <property type="match status" value="1"/>
</dbReference>
<dbReference type="NCBIfam" id="NF001204">
    <property type="entry name" value="PRK00166.1"/>
    <property type="match status" value="1"/>
</dbReference>
<dbReference type="PANTHER" id="PTHR40942">
    <property type="match status" value="1"/>
</dbReference>
<dbReference type="PANTHER" id="PTHR40942:SF2">
    <property type="entry name" value="CYTOCHROME-RELATED"/>
    <property type="match status" value="1"/>
</dbReference>
<dbReference type="Pfam" id="PF00149">
    <property type="entry name" value="Metallophos"/>
    <property type="match status" value="1"/>
</dbReference>
<dbReference type="PIRSF" id="PIRSF000903">
    <property type="entry name" value="B5n-ttraPtase_sm"/>
    <property type="match status" value="1"/>
</dbReference>
<dbReference type="SUPFAM" id="SSF56300">
    <property type="entry name" value="Metallo-dependent phosphatases"/>
    <property type="match status" value="1"/>
</dbReference>
<gene>
    <name evidence="1" type="primary">apaH</name>
    <name type="ordered locus">BUAPTUC7_141</name>
</gene>
<sequence>MSTYFISDIHGCYEEFRILLEKSSFNDKKDYLWIAGDLVSRGPDSLEVVKYLYSLKDRVQIVLGNHDINLIAVHAGIKDNKKENYFDEFLSSPDSVELINWLRCQSFLKVDEKRKIIMSHAGISPQWDINIAKVCALEIEDRLSHKNYALFLKEIYHNNIDFWRLDLNQLDRLRYSMNSFTRMRYCYPDGRLNMFCKKSPDFVKYPLRPWFLMPSSISKVYSIFFGHWSSLKGTHVPKPFFPLDAGCCWGEELVMLRWEDGKWFSQAYLSKKCI</sequence>
<comment type="function">
    <text evidence="1">Hydrolyzes diadenosine 5',5'''-P1,P4-tetraphosphate to yield ADP.</text>
</comment>
<comment type="catalytic activity">
    <reaction evidence="1">
        <text>P(1),P(4)-bis(5'-adenosyl) tetraphosphate + H2O = 2 ADP + 2 H(+)</text>
        <dbReference type="Rhea" id="RHEA:24252"/>
        <dbReference type="ChEBI" id="CHEBI:15377"/>
        <dbReference type="ChEBI" id="CHEBI:15378"/>
        <dbReference type="ChEBI" id="CHEBI:58141"/>
        <dbReference type="ChEBI" id="CHEBI:456216"/>
        <dbReference type="EC" id="3.6.1.41"/>
    </reaction>
</comment>
<comment type="similarity">
    <text evidence="1">Belongs to the Ap4A hydrolase family.</text>
</comment>
<proteinExistence type="inferred from homology"/>
<organism>
    <name type="scientific">Buchnera aphidicola subsp. Acyrthosiphon pisum (strain Tuc7)</name>
    <dbReference type="NCBI Taxonomy" id="561501"/>
    <lineage>
        <taxon>Bacteria</taxon>
        <taxon>Pseudomonadati</taxon>
        <taxon>Pseudomonadota</taxon>
        <taxon>Gammaproteobacteria</taxon>
        <taxon>Enterobacterales</taxon>
        <taxon>Erwiniaceae</taxon>
        <taxon>Buchnera</taxon>
    </lineage>
</organism>
<reference key="1">
    <citation type="journal article" date="2009" name="Science">
        <title>The dynamics and time scale of ongoing genomic erosion in symbiotic bacteria.</title>
        <authorList>
            <person name="Moran N.A."/>
            <person name="McLaughlin H.J."/>
            <person name="Sorek R."/>
        </authorList>
    </citation>
    <scope>NUCLEOTIDE SEQUENCE [LARGE SCALE GENOMIC DNA]</scope>
    <source>
        <strain>Tuc7</strain>
    </source>
</reference>
<keyword id="KW-0378">Hydrolase</keyword>
<protein>
    <recommendedName>
        <fullName evidence="1">Bis(5'-nucleosyl)-tetraphosphatase, symmetrical</fullName>
        <ecNumber evidence="1">3.6.1.41</ecNumber>
    </recommendedName>
    <alternativeName>
        <fullName evidence="1">Ap4A hydrolase</fullName>
    </alternativeName>
    <alternativeName>
        <fullName evidence="1">Diadenosine 5',5'''-P1,P4-tetraphosphate pyrophosphohydrolase</fullName>
    </alternativeName>
    <alternativeName>
        <fullName evidence="1">Diadenosine tetraphosphatase</fullName>
    </alternativeName>
</protein>
<accession>B8D747</accession>
<feature type="chain" id="PRO_1000124448" description="Bis(5'-nucleosyl)-tetraphosphatase, symmetrical">
    <location>
        <begin position="1"/>
        <end position="274"/>
    </location>
</feature>
<evidence type="ECO:0000255" key="1">
    <source>
        <dbReference type="HAMAP-Rule" id="MF_00199"/>
    </source>
</evidence>
<name>APAH_BUCAT</name>